<accession>Q28R79</accession>
<gene>
    <name evidence="1" type="primary">gatB</name>
    <name type="ordered locus">Jann_1866</name>
</gene>
<evidence type="ECO:0000255" key="1">
    <source>
        <dbReference type="HAMAP-Rule" id="MF_00121"/>
    </source>
</evidence>
<keyword id="KW-0067">ATP-binding</keyword>
<keyword id="KW-0436">Ligase</keyword>
<keyword id="KW-0547">Nucleotide-binding</keyword>
<keyword id="KW-0648">Protein biosynthesis</keyword>
<keyword id="KW-1185">Reference proteome</keyword>
<organism>
    <name type="scientific">Jannaschia sp. (strain CCS1)</name>
    <dbReference type="NCBI Taxonomy" id="290400"/>
    <lineage>
        <taxon>Bacteria</taxon>
        <taxon>Pseudomonadati</taxon>
        <taxon>Pseudomonadota</taxon>
        <taxon>Alphaproteobacteria</taxon>
        <taxon>Rhodobacterales</taxon>
        <taxon>Roseobacteraceae</taxon>
        <taxon>Jannaschia</taxon>
    </lineage>
</organism>
<dbReference type="EC" id="6.3.5.-" evidence="1"/>
<dbReference type="EMBL" id="CP000264">
    <property type="protein sequence ID" value="ABD54783.1"/>
    <property type="molecule type" value="Genomic_DNA"/>
</dbReference>
<dbReference type="RefSeq" id="WP_011454988.1">
    <property type="nucleotide sequence ID" value="NC_007802.1"/>
</dbReference>
<dbReference type="SMR" id="Q28R79"/>
<dbReference type="STRING" id="290400.Jann_1866"/>
<dbReference type="KEGG" id="jan:Jann_1866"/>
<dbReference type="eggNOG" id="COG0064">
    <property type="taxonomic scope" value="Bacteria"/>
</dbReference>
<dbReference type="HOGENOM" id="CLU_019240_0_0_5"/>
<dbReference type="OrthoDB" id="9804078at2"/>
<dbReference type="Proteomes" id="UP000008326">
    <property type="component" value="Chromosome"/>
</dbReference>
<dbReference type="GO" id="GO:0050566">
    <property type="term" value="F:asparaginyl-tRNA synthase (glutamine-hydrolyzing) activity"/>
    <property type="evidence" value="ECO:0007669"/>
    <property type="project" value="RHEA"/>
</dbReference>
<dbReference type="GO" id="GO:0005524">
    <property type="term" value="F:ATP binding"/>
    <property type="evidence" value="ECO:0007669"/>
    <property type="project" value="UniProtKB-KW"/>
</dbReference>
<dbReference type="GO" id="GO:0050567">
    <property type="term" value="F:glutaminyl-tRNA synthase (glutamine-hydrolyzing) activity"/>
    <property type="evidence" value="ECO:0007669"/>
    <property type="project" value="UniProtKB-UniRule"/>
</dbReference>
<dbReference type="GO" id="GO:0070681">
    <property type="term" value="P:glutaminyl-tRNAGln biosynthesis via transamidation"/>
    <property type="evidence" value="ECO:0007669"/>
    <property type="project" value="TreeGrafter"/>
</dbReference>
<dbReference type="GO" id="GO:0006412">
    <property type="term" value="P:translation"/>
    <property type="evidence" value="ECO:0007669"/>
    <property type="project" value="UniProtKB-UniRule"/>
</dbReference>
<dbReference type="FunFam" id="1.10.10.410:FF:000001">
    <property type="entry name" value="Aspartyl/glutamyl-tRNA(Asn/Gln) amidotransferase subunit B"/>
    <property type="match status" value="1"/>
</dbReference>
<dbReference type="FunFam" id="1.10.150.380:FF:000001">
    <property type="entry name" value="Aspartyl/glutamyl-tRNA(Asn/Gln) amidotransferase subunit B"/>
    <property type="match status" value="1"/>
</dbReference>
<dbReference type="Gene3D" id="1.10.10.410">
    <property type="match status" value="1"/>
</dbReference>
<dbReference type="Gene3D" id="1.10.150.380">
    <property type="entry name" value="GatB domain, N-terminal subdomain"/>
    <property type="match status" value="1"/>
</dbReference>
<dbReference type="HAMAP" id="MF_00121">
    <property type="entry name" value="GatB"/>
    <property type="match status" value="1"/>
</dbReference>
<dbReference type="InterPro" id="IPR017959">
    <property type="entry name" value="Asn/Gln-tRNA_amidoTrfase_suB/E"/>
</dbReference>
<dbReference type="InterPro" id="IPR006075">
    <property type="entry name" value="Asn/Gln-tRNA_Trfase_suB/E_cat"/>
</dbReference>
<dbReference type="InterPro" id="IPR018027">
    <property type="entry name" value="Asn/Gln_amidotransferase"/>
</dbReference>
<dbReference type="InterPro" id="IPR003789">
    <property type="entry name" value="Asn/Gln_tRNA_amidoTrase-B-like"/>
</dbReference>
<dbReference type="InterPro" id="IPR004413">
    <property type="entry name" value="GatB"/>
</dbReference>
<dbReference type="InterPro" id="IPR042114">
    <property type="entry name" value="GatB_C_1"/>
</dbReference>
<dbReference type="InterPro" id="IPR023168">
    <property type="entry name" value="GatB_Yqey_C_2"/>
</dbReference>
<dbReference type="InterPro" id="IPR017958">
    <property type="entry name" value="Gln-tRNA_amidoTrfase_suB_CS"/>
</dbReference>
<dbReference type="InterPro" id="IPR014746">
    <property type="entry name" value="Gln_synth/guanido_kin_cat_dom"/>
</dbReference>
<dbReference type="NCBIfam" id="TIGR00133">
    <property type="entry name" value="gatB"/>
    <property type="match status" value="1"/>
</dbReference>
<dbReference type="NCBIfam" id="NF004012">
    <property type="entry name" value="PRK05477.1-2"/>
    <property type="match status" value="1"/>
</dbReference>
<dbReference type="NCBIfam" id="NF004014">
    <property type="entry name" value="PRK05477.1-4"/>
    <property type="match status" value="1"/>
</dbReference>
<dbReference type="NCBIfam" id="NF004015">
    <property type="entry name" value="PRK05477.1-5"/>
    <property type="match status" value="1"/>
</dbReference>
<dbReference type="PANTHER" id="PTHR11659">
    <property type="entry name" value="GLUTAMYL-TRNA GLN AMIDOTRANSFERASE SUBUNIT B MITOCHONDRIAL AND PROKARYOTIC PET112-RELATED"/>
    <property type="match status" value="1"/>
</dbReference>
<dbReference type="PANTHER" id="PTHR11659:SF0">
    <property type="entry name" value="GLUTAMYL-TRNA(GLN) AMIDOTRANSFERASE SUBUNIT B, MITOCHONDRIAL"/>
    <property type="match status" value="1"/>
</dbReference>
<dbReference type="Pfam" id="PF02934">
    <property type="entry name" value="GatB_N"/>
    <property type="match status" value="1"/>
</dbReference>
<dbReference type="Pfam" id="PF02637">
    <property type="entry name" value="GatB_Yqey"/>
    <property type="match status" value="1"/>
</dbReference>
<dbReference type="SMART" id="SM00845">
    <property type="entry name" value="GatB_Yqey"/>
    <property type="match status" value="1"/>
</dbReference>
<dbReference type="SUPFAM" id="SSF89095">
    <property type="entry name" value="GatB/YqeY motif"/>
    <property type="match status" value="1"/>
</dbReference>
<dbReference type="SUPFAM" id="SSF55931">
    <property type="entry name" value="Glutamine synthetase/guanido kinase"/>
    <property type="match status" value="1"/>
</dbReference>
<dbReference type="PROSITE" id="PS01234">
    <property type="entry name" value="GATB"/>
    <property type="match status" value="1"/>
</dbReference>
<name>GATB_JANSC</name>
<proteinExistence type="inferred from homology"/>
<sequence length="503" mass="54962">MLDLTYDTPKPRVIAGAKQDWELVIGMEVHAQVSTRAKLFSGASTRFGAEPNSNVAFVDAGMPGMLPVINEACVSQAVRTGLGLKAQINLESAFDRKNYFYPDLPQGYQISQLYHPIVGEGEVLVELGDGLARLVRIERIHLEQDAGKSIHDMDPALSFVDLNRTGVALMEIVSKPDIRSPEEAAAYVVKLRQIMLYLGTCDGNMQNGNLRADVNVSICAPGQYEKYQATQDFSHLGTRCEIKNMNSMRFIQQAIEVEAKRQIAIIEGGGTVDQETRLYDPDKGETRSMRSKEEAHDYRYFPDPDLLPLTFDQAYVDAIAADLPELPDAKKARFIRGFGLSDYDASVLTADIDAAQYFEATATKDTGKLSANWVINELFGRLKKDERQIEDSPVAPAQLASLIALIASDTISGKIAKDVFEISYTTGRDPSEIVETEGLKQVTDTGAIEAAVDQIIADNPAQVAKAQENPKLAGWFVGQVMKATGGKANPKAVNQIVAQKLGG</sequence>
<protein>
    <recommendedName>
        <fullName evidence="1">Aspartyl/glutamyl-tRNA(Asn/Gln) amidotransferase subunit B</fullName>
        <shortName evidence="1">Asp/Glu-ADT subunit B</shortName>
        <ecNumber evidence="1">6.3.5.-</ecNumber>
    </recommendedName>
</protein>
<feature type="chain" id="PRO_0000241230" description="Aspartyl/glutamyl-tRNA(Asn/Gln) amidotransferase subunit B">
    <location>
        <begin position="1"/>
        <end position="503"/>
    </location>
</feature>
<comment type="function">
    <text evidence="1">Allows the formation of correctly charged Asn-tRNA(Asn) or Gln-tRNA(Gln) through the transamidation of misacylated Asp-tRNA(Asn) or Glu-tRNA(Gln) in organisms which lack either or both of asparaginyl-tRNA or glutaminyl-tRNA synthetases. The reaction takes place in the presence of glutamine and ATP through an activated phospho-Asp-tRNA(Asn) or phospho-Glu-tRNA(Gln).</text>
</comment>
<comment type="catalytic activity">
    <reaction evidence="1">
        <text>L-glutamyl-tRNA(Gln) + L-glutamine + ATP + H2O = L-glutaminyl-tRNA(Gln) + L-glutamate + ADP + phosphate + H(+)</text>
        <dbReference type="Rhea" id="RHEA:17521"/>
        <dbReference type="Rhea" id="RHEA-COMP:9681"/>
        <dbReference type="Rhea" id="RHEA-COMP:9684"/>
        <dbReference type="ChEBI" id="CHEBI:15377"/>
        <dbReference type="ChEBI" id="CHEBI:15378"/>
        <dbReference type="ChEBI" id="CHEBI:29985"/>
        <dbReference type="ChEBI" id="CHEBI:30616"/>
        <dbReference type="ChEBI" id="CHEBI:43474"/>
        <dbReference type="ChEBI" id="CHEBI:58359"/>
        <dbReference type="ChEBI" id="CHEBI:78520"/>
        <dbReference type="ChEBI" id="CHEBI:78521"/>
        <dbReference type="ChEBI" id="CHEBI:456216"/>
    </reaction>
</comment>
<comment type="catalytic activity">
    <reaction evidence="1">
        <text>L-aspartyl-tRNA(Asn) + L-glutamine + ATP + H2O = L-asparaginyl-tRNA(Asn) + L-glutamate + ADP + phosphate + 2 H(+)</text>
        <dbReference type="Rhea" id="RHEA:14513"/>
        <dbReference type="Rhea" id="RHEA-COMP:9674"/>
        <dbReference type="Rhea" id="RHEA-COMP:9677"/>
        <dbReference type="ChEBI" id="CHEBI:15377"/>
        <dbReference type="ChEBI" id="CHEBI:15378"/>
        <dbReference type="ChEBI" id="CHEBI:29985"/>
        <dbReference type="ChEBI" id="CHEBI:30616"/>
        <dbReference type="ChEBI" id="CHEBI:43474"/>
        <dbReference type="ChEBI" id="CHEBI:58359"/>
        <dbReference type="ChEBI" id="CHEBI:78515"/>
        <dbReference type="ChEBI" id="CHEBI:78516"/>
        <dbReference type="ChEBI" id="CHEBI:456216"/>
    </reaction>
</comment>
<comment type="subunit">
    <text evidence="1">Heterotrimer of A, B and C subunits.</text>
</comment>
<comment type="similarity">
    <text evidence="1">Belongs to the GatB/GatE family. GatB subfamily.</text>
</comment>
<reference key="1">
    <citation type="submission" date="2006-02" db="EMBL/GenBank/DDBJ databases">
        <title>Complete sequence of chromosome of Jannaschia sp. CCS1.</title>
        <authorList>
            <consortium name="US DOE Joint Genome Institute"/>
            <person name="Copeland A."/>
            <person name="Lucas S."/>
            <person name="Lapidus A."/>
            <person name="Barry K."/>
            <person name="Detter J.C."/>
            <person name="Glavina del Rio T."/>
            <person name="Hammon N."/>
            <person name="Israni S."/>
            <person name="Pitluck S."/>
            <person name="Brettin T."/>
            <person name="Bruce D."/>
            <person name="Han C."/>
            <person name="Tapia R."/>
            <person name="Gilna P."/>
            <person name="Chertkov O."/>
            <person name="Saunders E."/>
            <person name="Schmutz J."/>
            <person name="Larimer F."/>
            <person name="Land M."/>
            <person name="Kyrpides N."/>
            <person name="Lykidis A."/>
            <person name="Moran M.A."/>
            <person name="Belas R."/>
            <person name="Ye W."/>
            <person name="Buchan A."/>
            <person name="Gonzalez J.M."/>
            <person name="Schell M.A."/>
            <person name="Richardson P."/>
        </authorList>
    </citation>
    <scope>NUCLEOTIDE SEQUENCE [LARGE SCALE GENOMIC DNA]</scope>
    <source>
        <strain>CCS1</strain>
    </source>
</reference>